<evidence type="ECO:0000255" key="1">
    <source>
        <dbReference type="HAMAP-Rule" id="MF_00443"/>
    </source>
</evidence>
<proteinExistence type="inferred from homology"/>
<keyword id="KW-0963">Cytoplasm</keyword>
<keyword id="KW-0704">Schiff base</keyword>
<keyword id="KW-0784">Thiamine biosynthesis</keyword>
<keyword id="KW-0808">Transferase</keyword>
<protein>
    <recommendedName>
        <fullName evidence="1">Thiazole synthase</fullName>
        <ecNumber evidence="1">2.8.1.10</ecNumber>
    </recommendedName>
</protein>
<gene>
    <name evidence="1" type="primary">thiG</name>
    <name type="ordered locus">YE0290</name>
</gene>
<name>THIG_YERE8</name>
<dbReference type="EC" id="2.8.1.10" evidence="1"/>
<dbReference type="EMBL" id="AM286415">
    <property type="protein sequence ID" value="CAL10422.1"/>
    <property type="molecule type" value="Genomic_DNA"/>
</dbReference>
<dbReference type="RefSeq" id="WP_011815385.1">
    <property type="nucleotide sequence ID" value="NC_008800.1"/>
</dbReference>
<dbReference type="RefSeq" id="YP_001004672.1">
    <property type="nucleotide sequence ID" value="NC_008800.1"/>
</dbReference>
<dbReference type="SMR" id="A1JII4"/>
<dbReference type="KEGG" id="yen:YE0290"/>
<dbReference type="PATRIC" id="fig|393305.7.peg.382"/>
<dbReference type="eggNOG" id="COG2022">
    <property type="taxonomic scope" value="Bacteria"/>
</dbReference>
<dbReference type="HOGENOM" id="CLU_062233_1_0_6"/>
<dbReference type="OrthoDB" id="9805935at2"/>
<dbReference type="UniPathway" id="UPA00060"/>
<dbReference type="Proteomes" id="UP000000642">
    <property type="component" value="Chromosome"/>
</dbReference>
<dbReference type="GO" id="GO:0005737">
    <property type="term" value="C:cytoplasm"/>
    <property type="evidence" value="ECO:0007669"/>
    <property type="project" value="UniProtKB-SubCell"/>
</dbReference>
<dbReference type="GO" id="GO:1990107">
    <property type="term" value="F:thiazole synthase activity"/>
    <property type="evidence" value="ECO:0007669"/>
    <property type="project" value="UniProtKB-EC"/>
</dbReference>
<dbReference type="GO" id="GO:0009229">
    <property type="term" value="P:thiamine diphosphate biosynthetic process"/>
    <property type="evidence" value="ECO:0007669"/>
    <property type="project" value="UniProtKB-UniRule"/>
</dbReference>
<dbReference type="CDD" id="cd04728">
    <property type="entry name" value="ThiG"/>
    <property type="match status" value="1"/>
</dbReference>
<dbReference type="FunFam" id="3.20.20.70:FF:000049">
    <property type="entry name" value="Thiazole synthase"/>
    <property type="match status" value="1"/>
</dbReference>
<dbReference type="Gene3D" id="3.20.20.70">
    <property type="entry name" value="Aldolase class I"/>
    <property type="match status" value="1"/>
</dbReference>
<dbReference type="HAMAP" id="MF_00443">
    <property type="entry name" value="ThiG"/>
    <property type="match status" value="1"/>
</dbReference>
<dbReference type="InterPro" id="IPR013785">
    <property type="entry name" value="Aldolase_TIM"/>
</dbReference>
<dbReference type="InterPro" id="IPR033983">
    <property type="entry name" value="Thiazole_synthase_ThiG"/>
</dbReference>
<dbReference type="InterPro" id="IPR008867">
    <property type="entry name" value="ThiG"/>
</dbReference>
<dbReference type="PANTHER" id="PTHR34266">
    <property type="entry name" value="THIAZOLE SYNTHASE"/>
    <property type="match status" value="1"/>
</dbReference>
<dbReference type="PANTHER" id="PTHR34266:SF2">
    <property type="entry name" value="THIAZOLE SYNTHASE"/>
    <property type="match status" value="1"/>
</dbReference>
<dbReference type="Pfam" id="PF05690">
    <property type="entry name" value="ThiG"/>
    <property type="match status" value="1"/>
</dbReference>
<dbReference type="SUPFAM" id="SSF110399">
    <property type="entry name" value="ThiG-like"/>
    <property type="match status" value="1"/>
</dbReference>
<organism>
    <name type="scientific">Yersinia enterocolitica serotype O:8 / biotype 1B (strain NCTC 13174 / 8081)</name>
    <dbReference type="NCBI Taxonomy" id="393305"/>
    <lineage>
        <taxon>Bacteria</taxon>
        <taxon>Pseudomonadati</taxon>
        <taxon>Pseudomonadota</taxon>
        <taxon>Gammaproteobacteria</taxon>
        <taxon>Enterobacterales</taxon>
        <taxon>Yersiniaceae</taxon>
        <taxon>Yersinia</taxon>
    </lineage>
</organism>
<sequence length="262" mass="27753">MLKIADTTFTSRLFTGTGKFATAELMLEALRASGSQLITMAMKRVDLQAGNDAILAPLRQLGVRLLPNTSGAKTAQEAVFAARLAREALGTHWVKLEIHPDVKYLLPDPIETLKAAEILVKEGFVVLPYCGADPVLCKRLEEAGCAAVMPLGAPIGSNLGLRTRDFLQIIIAQAKVPVVVDAGIGAPSHALEAIELGADAVLVNTAIAVARSPVKMAHAFRLAVESGELACQAGLGNRQFDRAIATSPLTGFLSQLEEENHV</sequence>
<feature type="chain" id="PRO_1000026056" description="Thiazole synthase">
    <location>
        <begin position="1"/>
        <end position="262"/>
    </location>
</feature>
<feature type="active site" description="Schiff-base intermediate with DXP" evidence="1">
    <location>
        <position position="95"/>
    </location>
</feature>
<feature type="binding site" evidence="1">
    <location>
        <position position="156"/>
    </location>
    <ligand>
        <name>1-deoxy-D-xylulose 5-phosphate</name>
        <dbReference type="ChEBI" id="CHEBI:57792"/>
    </ligand>
</feature>
<feature type="binding site" evidence="1">
    <location>
        <begin position="182"/>
        <end position="183"/>
    </location>
    <ligand>
        <name>1-deoxy-D-xylulose 5-phosphate</name>
        <dbReference type="ChEBI" id="CHEBI:57792"/>
    </ligand>
</feature>
<feature type="binding site" evidence="1">
    <location>
        <begin position="204"/>
        <end position="205"/>
    </location>
    <ligand>
        <name>1-deoxy-D-xylulose 5-phosphate</name>
        <dbReference type="ChEBI" id="CHEBI:57792"/>
    </ligand>
</feature>
<comment type="function">
    <text evidence="1">Catalyzes the rearrangement of 1-deoxy-D-xylulose 5-phosphate (DXP) to produce the thiazole phosphate moiety of thiamine. Sulfur is provided by the thiocarboxylate moiety of the carrier protein ThiS. In vitro, sulfur can be provided by H(2)S.</text>
</comment>
<comment type="catalytic activity">
    <reaction evidence="1">
        <text>[ThiS sulfur-carrier protein]-C-terminal-Gly-aminoethanethioate + 2-iminoacetate + 1-deoxy-D-xylulose 5-phosphate = [ThiS sulfur-carrier protein]-C-terminal Gly-Gly + 2-[(2R,5Z)-2-carboxy-4-methylthiazol-5(2H)-ylidene]ethyl phosphate + 2 H2O + H(+)</text>
        <dbReference type="Rhea" id="RHEA:26297"/>
        <dbReference type="Rhea" id="RHEA-COMP:12909"/>
        <dbReference type="Rhea" id="RHEA-COMP:19908"/>
        <dbReference type="ChEBI" id="CHEBI:15377"/>
        <dbReference type="ChEBI" id="CHEBI:15378"/>
        <dbReference type="ChEBI" id="CHEBI:57792"/>
        <dbReference type="ChEBI" id="CHEBI:62899"/>
        <dbReference type="ChEBI" id="CHEBI:77846"/>
        <dbReference type="ChEBI" id="CHEBI:90778"/>
        <dbReference type="ChEBI" id="CHEBI:232372"/>
        <dbReference type="EC" id="2.8.1.10"/>
    </reaction>
</comment>
<comment type="pathway">
    <text evidence="1">Cofactor biosynthesis; thiamine diphosphate biosynthesis.</text>
</comment>
<comment type="subunit">
    <text evidence="1">Homotetramer. Forms heterodimers with either ThiH or ThiS.</text>
</comment>
<comment type="subcellular location">
    <subcellularLocation>
        <location evidence="1">Cytoplasm</location>
    </subcellularLocation>
</comment>
<comment type="similarity">
    <text evidence="1">Belongs to the ThiG family.</text>
</comment>
<accession>A1JII4</accession>
<reference key="1">
    <citation type="journal article" date="2006" name="PLoS Genet.">
        <title>The complete genome sequence and comparative genome analysis of the high pathogenicity Yersinia enterocolitica strain 8081.</title>
        <authorList>
            <person name="Thomson N.R."/>
            <person name="Howard S."/>
            <person name="Wren B.W."/>
            <person name="Holden M.T.G."/>
            <person name="Crossman L."/>
            <person name="Challis G.L."/>
            <person name="Churcher C."/>
            <person name="Mungall K."/>
            <person name="Brooks K."/>
            <person name="Chillingworth T."/>
            <person name="Feltwell T."/>
            <person name="Abdellah Z."/>
            <person name="Hauser H."/>
            <person name="Jagels K."/>
            <person name="Maddison M."/>
            <person name="Moule S."/>
            <person name="Sanders M."/>
            <person name="Whitehead S."/>
            <person name="Quail M.A."/>
            <person name="Dougan G."/>
            <person name="Parkhill J."/>
            <person name="Prentice M.B."/>
        </authorList>
    </citation>
    <scope>NUCLEOTIDE SEQUENCE [LARGE SCALE GENOMIC DNA]</scope>
    <source>
        <strain>NCTC 13174 / 8081</strain>
    </source>
</reference>